<protein>
    <recommendedName>
        <fullName>Zinc finger CCCH-type with G patch domain-containing protein</fullName>
    </recommendedName>
    <alternativeName>
        <fullName>G patch domain-containing protein 6</fullName>
    </alternativeName>
    <alternativeName>
        <fullName>Zinc finger CCCH domain-containing protein 9</fullName>
    </alternativeName>
    <alternativeName>
        <fullName>Zinc finger and G patch domain-containing protein</fullName>
    </alternativeName>
</protein>
<keyword id="KW-0002">3D-structure</keyword>
<keyword id="KW-0007">Acetylation</keyword>
<keyword id="KW-0025">Alternative splicing</keyword>
<keyword id="KW-0238">DNA-binding</keyword>
<keyword id="KW-0479">Metal-binding</keyword>
<keyword id="KW-0539">Nucleus</keyword>
<keyword id="KW-0597">Phosphoprotein</keyword>
<keyword id="KW-1267">Proteomics identification</keyword>
<keyword id="KW-1185">Reference proteome</keyword>
<keyword id="KW-0678">Repressor</keyword>
<keyword id="KW-0804">Transcription</keyword>
<keyword id="KW-0805">Transcription regulation</keyword>
<keyword id="KW-0832">Ubl conjugation</keyword>
<keyword id="KW-0862">Zinc</keyword>
<keyword id="KW-0863">Zinc-finger</keyword>
<dbReference type="EMBL" id="AB058750">
    <property type="protein sequence ID" value="BAB47476.3"/>
    <property type="status" value="ALT_INIT"/>
    <property type="molecule type" value="mRNA"/>
</dbReference>
<dbReference type="EMBL" id="AK027878">
    <property type="protein sequence ID" value="BAB55426.1"/>
    <property type="molecule type" value="mRNA"/>
</dbReference>
<dbReference type="EMBL" id="AK074961">
    <property type="protein sequence ID" value="BAC11317.1"/>
    <property type="status" value="ALT_FRAME"/>
    <property type="molecule type" value="mRNA"/>
</dbReference>
<dbReference type="EMBL" id="AL121845">
    <property type="status" value="NOT_ANNOTATED_CDS"/>
    <property type="molecule type" value="Genomic_DNA"/>
</dbReference>
<dbReference type="EMBL" id="CH471077">
    <property type="protein sequence ID" value="EAW75223.1"/>
    <property type="molecule type" value="Genomic_DNA"/>
</dbReference>
<dbReference type="EMBL" id="CH471077">
    <property type="protein sequence ID" value="EAW75226.1"/>
    <property type="molecule type" value="Genomic_DNA"/>
</dbReference>
<dbReference type="EMBL" id="BC019338">
    <property type="protein sequence ID" value="AAH19338.1"/>
    <property type="molecule type" value="mRNA"/>
</dbReference>
<dbReference type="EMBL" id="BC032612">
    <property type="protein sequence ID" value="AAH32612.1"/>
    <property type="molecule type" value="mRNA"/>
</dbReference>
<dbReference type="CCDS" id="CCDS13534.1">
    <molecule id="Q8N5A5-1"/>
</dbReference>
<dbReference type="CCDS" id="CCDS13535.1">
    <molecule id="Q8N5A5-2"/>
</dbReference>
<dbReference type="CCDS" id="CCDS56203.1">
    <molecule id="Q8N5A5-3"/>
</dbReference>
<dbReference type="RefSeq" id="NP_001076582.1">
    <molecule id="Q8N5A5-2"/>
    <property type="nucleotide sequence ID" value="NM_001083113.2"/>
</dbReference>
<dbReference type="RefSeq" id="NP_001182582.1">
    <molecule id="Q8N5A5-2"/>
    <property type="nucleotide sequence ID" value="NM_001195653.2"/>
</dbReference>
<dbReference type="RefSeq" id="NP_001182583.1">
    <molecule id="Q8N5A5-3"/>
    <property type="nucleotide sequence ID" value="NM_001195654.2"/>
</dbReference>
<dbReference type="RefSeq" id="NP_115916.3">
    <molecule id="Q8N5A5-1"/>
    <property type="nucleotide sequence ID" value="NM_032527.4"/>
</dbReference>
<dbReference type="RefSeq" id="NP_852150.2">
    <molecule id="Q8N5A5-2"/>
    <property type="nucleotide sequence ID" value="NM_181485.3"/>
</dbReference>
<dbReference type="PDB" id="4II1">
    <property type="method" value="X-ray"/>
    <property type="resolution" value="2.65 A"/>
    <property type="chains" value="A/B/C/D=120-268"/>
</dbReference>
<dbReference type="PDBsum" id="4II1"/>
<dbReference type="SMR" id="Q8N5A5"/>
<dbReference type="BioGRID" id="124150">
    <property type="interactions" value="196"/>
</dbReference>
<dbReference type="FunCoup" id="Q8N5A5">
    <property type="interactions" value="2081"/>
</dbReference>
<dbReference type="IntAct" id="Q8N5A5">
    <property type="interactions" value="142"/>
</dbReference>
<dbReference type="MINT" id="Q8N5A5"/>
<dbReference type="STRING" id="9606.ENSP00000332013"/>
<dbReference type="GlyGen" id="Q8N5A5">
    <property type="glycosylation" value="1 site, 1 O-linked glycan (1 site)"/>
</dbReference>
<dbReference type="iPTMnet" id="Q8N5A5"/>
<dbReference type="PhosphoSitePlus" id="Q8N5A5"/>
<dbReference type="BioMuta" id="ZGPAT"/>
<dbReference type="DMDM" id="147744602"/>
<dbReference type="jPOST" id="Q8N5A5"/>
<dbReference type="MassIVE" id="Q8N5A5"/>
<dbReference type="PaxDb" id="9606-ENSP00000332013"/>
<dbReference type="PeptideAtlas" id="Q8N5A5"/>
<dbReference type="ProteomicsDB" id="72025">
    <molecule id="Q8N5A5-1"/>
</dbReference>
<dbReference type="ProteomicsDB" id="72026">
    <molecule id="Q8N5A5-2"/>
</dbReference>
<dbReference type="ProteomicsDB" id="72027">
    <molecule id="Q8N5A5-3"/>
</dbReference>
<dbReference type="Pumba" id="Q8N5A5"/>
<dbReference type="ABCD" id="Q8N5A5">
    <property type="antibodies" value="4 sequenced antibodies"/>
</dbReference>
<dbReference type="Antibodypedia" id="29857">
    <property type="antibodies" value="119 antibodies from 26 providers"/>
</dbReference>
<dbReference type="DNASU" id="84619"/>
<dbReference type="Ensembl" id="ENST00000328969.5">
    <molecule id="Q8N5A5-1"/>
    <property type="protein sequence ID" value="ENSP00000332013.5"/>
    <property type="gene ID" value="ENSG00000197114.12"/>
</dbReference>
<dbReference type="Ensembl" id="ENST00000355969.11">
    <molecule id="Q8N5A5-2"/>
    <property type="protein sequence ID" value="ENSP00000348242.6"/>
    <property type="gene ID" value="ENSG00000197114.12"/>
</dbReference>
<dbReference type="Ensembl" id="ENST00000357119.8">
    <molecule id="Q8N5A5-3"/>
    <property type="protein sequence ID" value="ENSP00000349634.4"/>
    <property type="gene ID" value="ENSG00000197114.12"/>
</dbReference>
<dbReference type="Ensembl" id="ENST00000369967.7">
    <molecule id="Q8N5A5-2"/>
    <property type="protein sequence ID" value="ENSP00000358984.3"/>
    <property type="gene ID" value="ENSG00000197114.12"/>
</dbReference>
<dbReference type="Ensembl" id="ENST00000448100.6">
    <molecule id="Q8N5A5-2"/>
    <property type="protein sequence ID" value="ENSP00000391176.1"/>
    <property type="gene ID" value="ENSG00000197114.12"/>
</dbReference>
<dbReference type="GeneID" id="84619"/>
<dbReference type="KEGG" id="hsa:84619"/>
<dbReference type="MANE-Select" id="ENST00000355969.11">
    <molecule id="Q8N5A5-2"/>
    <property type="protein sequence ID" value="ENSP00000348242.6"/>
    <property type="RefSeq nucleotide sequence ID" value="NM_181485.3"/>
    <property type="RefSeq protein sequence ID" value="NP_852150.2"/>
</dbReference>
<dbReference type="UCSC" id="uc002ygi.3">
    <molecule id="Q8N5A5-1"/>
    <property type="organism name" value="human"/>
</dbReference>
<dbReference type="AGR" id="HGNC:15948"/>
<dbReference type="CTD" id="84619"/>
<dbReference type="DisGeNET" id="84619"/>
<dbReference type="GeneCards" id="ZGPAT"/>
<dbReference type="HGNC" id="HGNC:15948">
    <property type="gene designation" value="ZGPAT"/>
</dbReference>
<dbReference type="HPA" id="ENSG00000197114">
    <property type="expression patterns" value="Tissue enriched (liver)"/>
</dbReference>
<dbReference type="MIM" id="619577">
    <property type="type" value="gene"/>
</dbReference>
<dbReference type="neXtProt" id="NX_Q8N5A5"/>
<dbReference type="OpenTargets" id="ENSG00000197114"/>
<dbReference type="PharmGKB" id="PA134881248"/>
<dbReference type="VEuPathDB" id="HostDB:ENSG00000197114"/>
<dbReference type="eggNOG" id="KOG2185">
    <property type="taxonomic scope" value="Eukaryota"/>
</dbReference>
<dbReference type="GeneTree" id="ENSGT00390000000732"/>
<dbReference type="HOGENOM" id="CLU_040504_1_0_1"/>
<dbReference type="InParanoid" id="Q8N5A5"/>
<dbReference type="OMA" id="HTAIIME"/>
<dbReference type="OrthoDB" id="4822at2759"/>
<dbReference type="PAN-GO" id="Q8N5A5">
    <property type="GO annotations" value="4 GO annotations based on evolutionary models"/>
</dbReference>
<dbReference type="PhylomeDB" id="Q8N5A5"/>
<dbReference type="TreeFam" id="TF105970"/>
<dbReference type="PathwayCommons" id="Q8N5A5"/>
<dbReference type="SignaLink" id="Q8N5A5"/>
<dbReference type="BioGRID-ORCS" id="84619">
    <property type="hits" value="25 hits in 1166 CRISPR screens"/>
</dbReference>
<dbReference type="CD-CODE" id="6F24707C">
    <property type="entry name" value="Cajal body"/>
</dbReference>
<dbReference type="ChiTaRS" id="ZGPAT">
    <property type="organism name" value="human"/>
</dbReference>
<dbReference type="EvolutionaryTrace" id="Q8N5A5"/>
<dbReference type="GeneWiki" id="ZGPAT"/>
<dbReference type="GenomeRNAi" id="84619"/>
<dbReference type="Pharos" id="Q8N5A5">
    <property type="development level" value="Tbio"/>
</dbReference>
<dbReference type="PRO" id="PR:Q8N5A5"/>
<dbReference type="Proteomes" id="UP000005640">
    <property type="component" value="Chromosome 20"/>
</dbReference>
<dbReference type="RNAct" id="Q8N5A5">
    <property type="molecule type" value="protein"/>
</dbReference>
<dbReference type="Bgee" id="ENSG00000197114">
    <property type="expression patterns" value="Expressed in right lobe of liver and 98 other cell types or tissues"/>
</dbReference>
<dbReference type="ExpressionAtlas" id="Q8N5A5">
    <property type="expression patterns" value="baseline and differential"/>
</dbReference>
<dbReference type="GO" id="GO:0000785">
    <property type="term" value="C:chromatin"/>
    <property type="evidence" value="ECO:0000247"/>
    <property type="project" value="NTNU_SB"/>
</dbReference>
<dbReference type="GO" id="GO:0005654">
    <property type="term" value="C:nucleoplasm"/>
    <property type="evidence" value="ECO:0000314"/>
    <property type="project" value="HPA"/>
</dbReference>
<dbReference type="GO" id="GO:0005634">
    <property type="term" value="C:nucleus"/>
    <property type="evidence" value="ECO:0000314"/>
    <property type="project" value="UniProtKB"/>
</dbReference>
<dbReference type="GO" id="GO:0005886">
    <property type="term" value="C:plasma membrane"/>
    <property type="evidence" value="ECO:0000314"/>
    <property type="project" value="HPA"/>
</dbReference>
<dbReference type="GO" id="GO:0003700">
    <property type="term" value="F:DNA-binding transcription factor activity"/>
    <property type="evidence" value="ECO:0000314"/>
    <property type="project" value="UniProtKB"/>
</dbReference>
<dbReference type="GO" id="GO:0000981">
    <property type="term" value="F:DNA-binding transcription factor activity, RNA polymerase II-specific"/>
    <property type="evidence" value="ECO:0000247"/>
    <property type="project" value="NTNU_SB"/>
</dbReference>
<dbReference type="GO" id="GO:0001227">
    <property type="term" value="F:DNA-binding transcription repressor activity, RNA polymerase II-specific"/>
    <property type="evidence" value="ECO:0000314"/>
    <property type="project" value="NTNU_SB"/>
</dbReference>
<dbReference type="GO" id="GO:0000978">
    <property type="term" value="F:RNA polymerase II cis-regulatory region sequence-specific DNA binding"/>
    <property type="evidence" value="ECO:0000314"/>
    <property type="project" value="NTNU_SB"/>
</dbReference>
<dbReference type="GO" id="GO:0043565">
    <property type="term" value="F:sequence-specific DNA binding"/>
    <property type="evidence" value="ECO:0000314"/>
    <property type="project" value="UniProtKB"/>
</dbReference>
<dbReference type="GO" id="GO:0008270">
    <property type="term" value="F:zinc ion binding"/>
    <property type="evidence" value="ECO:0007669"/>
    <property type="project" value="UniProtKB-KW"/>
</dbReference>
<dbReference type="GO" id="GO:0045892">
    <property type="term" value="P:negative regulation of DNA-templated transcription"/>
    <property type="evidence" value="ECO:0000314"/>
    <property type="project" value="UniProtKB"/>
</dbReference>
<dbReference type="GO" id="GO:0007175">
    <property type="term" value="P:negative regulation of epidermal growth factor-activated receptor activity"/>
    <property type="evidence" value="ECO:0000314"/>
    <property type="project" value="UniProtKB"/>
</dbReference>
<dbReference type="GO" id="GO:0000122">
    <property type="term" value="P:negative regulation of transcription by RNA polymerase II"/>
    <property type="evidence" value="ECO:0000314"/>
    <property type="project" value="NTNU_SB"/>
</dbReference>
<dbReference type="CDD" id="cd20384">
    <property type="entry name" value="Tudor_ZGPAT"/>
    <property type="match status" value="1"/>
</dbReference>
<dbReference type="FunFam" id="2.30.30.140:FF:000071">
    <property type="entry name" value="Zinc finger CCCH-type with G patch domain-containing protein"/>
    <property type="match status" value="1"/>
</dbReference>
<dbReference type="FunFam" id="2.30.30.1190:FF:000001">
    <property type="entry name" value="zinc finger CCCH-type with G patch domain-containing protein"/>
    <property type="match status" value="1"/>
</dbReference>
<dbReference type="Gene3D" id="2.30.30.1190">
    <property type="match status" value="1"/>
</dbReference>
<dbReference type="Gene3D" id="2.30.30.140">
    <property type="match status" value="1"/>
</dbReference>
<dbReference type="InterPro" id="IPR000467">
    <property type="entry name" value="G_patch_dom"/>
</dbReference>
<dbReference type="InterPro" id="IPR041367">
    <property type="entry name" value="Znf-CCCH_4"/>
</dbReference>
<dbReference type="InterPro" id="IPR000571">
    <property type="entry name" value="Znf_CCCH"/>
</dbReference>
<dbReference type="InterPro" id="IPR036855">
    <property type="entry name" value="Znf_CCCH_sf"/>
</dbReference>
<dbReference type="PANTHER" id="PTHR46297">
    <property type="entry name" value="ZINC FINGER CCCH-TYPE WITH G PATCH DOMAIN-CONTAINING PROTEIN"/>
    <property type="match status" value="1"/>
</dbReference>
<dbReference type="PANTHER" id="PTHR46297:SF1">
    <property type="entry name" value="ZINC FINGER CCCH-TYPE WITH G PATCH DOMAIN-CONTAINING PROTEIN"/>
    <property type="match status" value="1"/>
</dbReference>
<dbReference type="Pfam" id="PF01585">
    <property type="entry name" value="G-patch"/>
    <property type="match status" value="1"/>
</dbReference>
<dbReference type="Pfam" id="PF18044">
    <property type="entry name" value="zf-CCCH_4"/>
    <property type="match status" value="1"/>
</dbReference>
<dbReference type="SMART" id="SM00443">
    <property type="entry name" value="G_patch"/>
    <property type="match status" value="1"/>
</dbReference>
<dbReference type="SMART" id="SM00356">
    <property type="entry name" value="ZnF_C3H1"/>
    <property type="match status" value="1"/>
</dbReference>
<dbReference type="SUPFAM" id="SSF90229">
    <property type="entry name" value="CCCH zinc finger"/>
    <property type="match status" value="1"/>
</dbReference>
<dbReference type="SUPFAM" id="SSF63748">
    <property type="entry name" value="Tudor/PWWP/MBT"/>
    <property type="match status" value="1"/>
</dbReference>
<dbReference type="PROSITE" id="PS50174">
    <property type="entry name" value="G_PATCH"/>
    <property type="match status" value="1"/>
</dbReference>
<dbReference type="PROSITE" id="PS50103">
    <property type="entry name" value="ZF_C3H1"/>
    <property type="match status" value="1"/>
</dbReference>
<proteinExistence type="evidence at protein level"/>
<reference key="1">
    <citation type="journal article" date="2001" name="DNA Res.">
        <title>Prediction of the coding sequences of unidentified human genes. XX. The complete sequences of 100 new cDNA clones from brain which code for large proteins in vitro.</title>
        <authorList>
            <person name="Nagase T."/>
            <person name="Nakayama M."/>
            <person name="Nakajima D."/>
            <person name="Kikuno R."/>
            <person name="Ohara O."/>
        </authorList>
    </citation>
    <scope>NUCLEOTIDE SEQUENCE [LARGE SCALE MRNA] (ISOFORM 2)</scope>
    <scope>VARIANT ARG-61</scope>
    <source>
        <tissue>Brain</tissue>
    </source>
</reference>
<reference key="2">
    <citation type="submission" date="2009-06" db="EMBL/GenBank/DDBJ databases">
        <authorList>
            <person name="Ohara O."/>
            <person name="Nagase T."/>
            <person name="Kikuno R."/>
        </authorList>
    </citation>
    <scope>SEQUENCE REVISION</scope>
</reference>
<reference key="3">
    <citation type="journal article" date="2004" name="Nat. Genet.">
        <title>Complete sequencing and characterization of 21,243 full-length human cDNAs.</title>
        <authorList>
            <person name="Ota T."/>
            <person name="Suzuki Y."/>
            <person name="Nishikawa T."/>
            <person name="Otsuki T."/>
            <person name="Sugiyama T."/>
            <person name="Irie R."/>
            <person name="Wakamatsu A."/>
            <person name="Hayashi K."/>
            <person name="Sato H."/>
            <person name="Nagai K."/>
            <person name="Kimura K."/>
            <person name="Makita H."/>
            <person name="Sekine M."/>
            <person name="Obayashi M."/>
            <person name="Nishi T."/>
            <person name="Shibahara T."/>
            <person name="Tanaka T."/>
            <person name="Ishii S."/>
            <person name="Yamamoto J."/>
            <person name="Saito K."/>
            <person name="Kawai Y."/>
            <person name="Isono Y."/>
            <person name="Nakamura Y."/>
            <person name="Nagahari K."/>
            <person name="Murakami K."/>
            <person name="Yasuda T."/>
            <person name="Iwayanagi T."/>
            <person name="Wagatsuma M."/>
            <person name="Shiratori A."/>
            <person name="Sudo H."/>
            <person name="Hosoiri T."/>
            <person name="Kaku Y."/>
            <person name="Kodaira H."/>
            <person name="Kondo H."/>
            <person name="Sugawara M."/>
            <person name="Takahashi M."/>
            <person name="Kanda K."/>
            <person name="Yokoi T."/>
            <person name="Furuya T."/>
            <person name="Kikkawa E."/>
            <person name="Omura Y."/>
            <person name="Abe K."/>
            <person name="Kamihara K."/>
            <person name="Katsuta N."/>
            <person name="Sato K."/>
            <person name="Tanikawa M."/>
            <person name="Yamazaki M."/>
            <person name="Ninomiya K."/>
            <person name="Ishibashi T."/>
            <person name="Yamashita H."/>
            <person name="Murakawa K."/>
            <person name="Fujimori K."/>
            <person name="Tanai H."/>
            <person name="Kimata M."/>
            <person name="Watanabe M."/>
            <person name="Hiraoka S."/>
            <person name="Chiba Y."/>
            <person name="Ishida S."/>
            <person name="Ono Y."/>
            <person name="Takiguchi S."/>
            <person name="Watanabe S."/>
            <person name="Yosida M."/>
            <person name="Hotuta T."/>
            <person name="Kusano J."/>
            <person name="Kanehori K."/>
            <person name="Takahashi-Fujii A."/>
            <person name="Hara H."/>
            <person name="Tanase T.-O."/>
            <person name="Nomura Y."/>
            <person name="Togiya S."/>
            <person name="Komai F."/>
            <person name="Hara R."/>
            <person name="Takeuchi K."/>
            <person name="Arita M."/>
            <person name="Imose N."/>
            <person name="Musashino K."/>
            <person name="Yuuki H."/>
            <person name="Oshima A."/>
            <person name="Sasaki N."/>
            <person name="Aotsuka S."/>
            <person name="Yoshikawa Y."/>
            <person name="Matsunawa H."/>
            <person name="Ichihara T."/>
            <person name="Shiohata N."/>
            <person name="Sano S."/>
            <person name="Moriya S."/>
            <person name="Momiyama H."/>
            <person name="Satoh N."/>
            <person name="Takami S."/>
            <person name="Terashima Y."/>
            <person name="Suzuki O."/>
            <person name="Nakagawa S."/>
            <person name="Senoh A."/>
            <person name="Mizoguchi H."/>
            <person name="Goto Y."/>
            <person name="Shimizu F."/>
            <person name="Wakebe H."/>
            <person name="Hishigaki H."/>
            <person name="Watanabe T."/>
            <person name="Sugiyama A."/>
            <person name="Takemoto M."/>
            <person name="Kawakami B."/>
            <person name="Yamazaki M."/>
            <person name="Watanabe K."/>
            <person name="Kumagai A."/>
            <person name="Itakura S."/>
            <person name="Fukuzumi Y."/>
            <person name="Fujimori Y."/>
            <person name="Komiyama M."/>
            <person name="Tashiro H."/>
            <person name="Tanigami A."/>
            <person name="Fujiwara T."/>
            <person name="Ono T."/>
            <person name="Yamada K."/>
            <person name="Fujii Y."/>
            <person name="Ozaki K."/>
            <person name="Hirao M."/>
            <person name="Ohmori Y."/>
            <person name="Kawabata A."/>
            <person name="Hikiji T."/>
            <person name="Kobatake N."/>
            <person name="Inagaki H."/>
            <person name="Ikema Y."/>
            <person name="Okamoto S."/>
            <person name="Okitani R."/>
            <person name="Kawakami T."/>
            <person name="Noguchi S."/>
            <person name="Itoh T."/>
            <person name="Shigeta K."/>
            <person name="Senba T."/>
            <person name="Matsumura K."/>
            <person name="Nakajima Y."/>
            <person name="Mizuno T."/>
            <person name="Morinaga M."/>
            <person name="Sasaki M."/>
            <person name="Togashi T."/>
            <person name="Oyama M."/>
            <person name="Hata H."/>
            <person name="Watanabe M."/>
            <person name="Komatsu T."/>
            <person name="Mizushima-Sugano J."/>
            <person name="Satoh T."/>
            <person name="Shirai Y."/>
            <person name="Takahashi Y."/>
            <person name="Nakagawa K."/>
            <person name="Okumura K."/>
            <person name="Nagase T."/>
            <person name="Nomura N."/>
            <person name="Kikuchi H."/>
            <person name="Masuho Y."/>
            <person name="Yamashita R."/>
            <person name="Nakai K."/>
            <person name="Yada T."/>
            <person name="Nakamura Y."/>
            <person name="Ohara O."/>
            <person name="Isogai T."/>
            <person name="Sugano S."/>
        </authorList>
    </citation>
    <scope>NUCLEOTIDE SEQUENCE [LARGE SCALE MRNA] (ISOFORM 1)</scope>
    <scope>VARIANT ARG-61</scope>
    <source>
        <tissue>Thyroid</tissue>
    </source>
</reference>
<reference key="4">
    <citation type="journal article" date="2001" name="Nature">
        <title>The DNA sequence and comparative analysis of human chromosome 20.</title>
        <authorList>
            <person name="Deloukas P."/>
            <person name="Matthews L.H."/>
            <person name="Ashurst J.L."/>
            <person name="Burton J."/>
            <person name="Gilbert J.G.R."/>
            <person name="Jones M."/>
            <person name="Stavrides G."/>
            <person name="Almeida J.P."/>
            <person name="Babbage A.K."/>
            <person name="Bagguley C.L."/>
            <person name="Bailey J."/>
            <person name="Barlow K.F."/>
            <person name="Bates K.N."/>
            <person name="Beard L.M."/>
            <person name="Beare D.M."/>
            <person name="Beasley O.P."/>
            <person name="Bird C.P."/>
            <person name="Blakey S.E."/>
            <person name="Bridgeman A.M."/>
            <person name="Brown A.J."/>
            <person name="Buck D."/>
            <person name="Burrill W.D."/>
            <person name="Butler A.P."/>
            <person name="Carder C."/>
            <person name="Carter N.P."/>
            <person name="Chapman J.C."/>
            <person name="Clamp M."/>
            <person name="Clark G."/>
            <person name="Clark L.N."/>
            <person name="Clark S.Y."/>
            <person name="Clee C.M."/>
            <person name="Clegg S."/>
            <person name="Cobley V.E."/>
            <person name="Collier R.E."/>
            <person name="Connor R.E."/>
            <person name="Corby N.R."/>
            <person name="Coulson A."/>
            <person name="Coville G.J."/>
            <person name="Deadman R."/>
            <person name="Dhami P.D."/>
            <person name="Dunn M."/>
            <person name="Ellington A.G."/>
            <person name="Frankland J.A."/>
            <person name="Fraser A."/>
            <person name="French L."/>
            <person name="Garner P."/>
            <person name="Grafham D.V."/>
            <person name="Griffiths C."/>
            <person name="Griffiths M.N.D."/>
            <person name="Gwilliam R."/>
            <person name="Hall R.E."/>
            <person name="Hammond S."/>
            <person name="Harley J.L."/>
            <person name="Heath P.D."/>
            <person name="Ho S."/>
            <person name="Holden J.L."/>
            <person name="Howden P.J."/>
            <person name="Huckle E."/>
            <person name="Hunt A.R."/>
            <person name="Hunt S.E."/>
            <person name="Jekosch K."/>
            <person name="Johnson C.M."/>
            <person name="Johnson D."/>
            <person name="Kay M.P."/>
            <person name="Kimberley A.M."/>
            <person name="King A."/>
            <person name="Knights A."/>
            <person name="Laird G.K."/>
            <person name="Lawlor S."/>
            <person name="Lehvaeslaiho M.H."/>
            <person name="Leversha M.A."/>
            <person name="Lloyd C."/>
            <person name="Lloyd D.M."/>
            <person name="Lovell J.D."/>
            <person name="Marsh V.L."/>
            <person name="Martin S.L."/>
            <person name="McConnachie L.J."/>
            <person name="McLay K."/>
            <person name="McMurray A.A."/>
            <person name="Milne S.A."/>
            <person name="Mistry D."/>
            <person name="Moore M.J.F."/>
            <person name="Mullikin J.C."/>
            <person name="Nickerson T."/>
            <person name="Oliver K."/>
            <person name="Parker A."/>
            <person name="Patel R."/>
            <person name="Pearce T.A.V."/>
            <person name="Peck A.I."/>
            <person name="Phillimore B.J.C.T."/>
            <person name="Prathalingam S.R."/>
            <person name="Plumb R.W."/>
            <person name="Ramsay H."/>
            <person name="Rice C.M."/>
            <person name="Ross M.T."/>
            <person name="Scott C.E."/>
            <person name="Sehra H.K."/>
            <person name="Shownkeen R."/>
            <person name="Sims S."/>
            <person name="Skuce C.D."/>
            <person name="Smith M.L."/>
            <person name="Soderlund C."/>
            <person name="Steward C.A."/>
            <person name="Sulston J.E."/>
            <person name="Swann R.M."/>
            <person name="Sycamore N."/>
            <person name="Taylor R."/>
            <person name="Tee L."/>
            <person name="Thomas D.W."/>
            <person name="Thorpe A."/>
            <person name="Tracey A."/>
            <person name="Tromans A.C."/>
            <person name="Vaudin M."/>
            <person name="Wall M."/>
            <person name="Wallis J.M."/>
            <person name="Whitehead S.L."/>
            <person name="Whittaker P."/>
            <person name="Willey D.L."/>
            <person name="Williams L."/>
            <person name="Williams S.A."/>
            <person name="Wilming L."/>
            <person name="Wray P.W."/>
            <person name="Hubbard T."/>
            <person name="Durbin R.M."/>
            <person name="Bentley D.R."/>
            <person name="Beck S."/>
            <person name="Rogers J."/>
        </authorList>
    </citation>
    <scope>NUCLEOTIDE SEQUENCE [LARGE SCALE GENOMIC DNA]</scope>
</reference>
<reference key="5">
    <citation type="submission" date="2005-09" db="EMBL/GenBank/DDBJ databases">
        <authorList>
            <person name="Mural R.J."/>
            <person name="Istrail S."/>
            <person name="Sutton G.G."/>
            <person name="Florea L."/>
            <person name="Halpern A.L."/>
            <person name="Mobarry C.M."/>
            <person name="Lippert R."/>
            <person name="Walenz B."/>
            <person name="Shatkay H."/>
            <person name="Dew I."/>
            <person name="Miller J.R."/>
            <person name="Flanigan M.J."/>
            <person name="Edwards N.J."/>
            <person name="Bolanos R."/>
            <person name="Fasulo D."/>
            <person name="Halldorsson B.V."/>
            <person name="Hannenhalli S."/>
            <person name="Turner R."/>
            <person name="Yooseph S."/>
            <person name="Lu F."/>
            <person name="Nusskern D.R."/>
            <person name="Shue B.C."/>
            <person name="Zheng X.H."/>
            <person name="Zhong F."/>
            <person name="Delcher A.L."/>
            <person name="Huson D.H."/>
            <person name="Kravitz S.A."/>
            <person name="Mouchard L."/>
            <person name="Reinert K."/>
            <person name="Remington K.A."/>
            <person name="Clark A.G."/>
            <person name="Waterman M.S."/>
            <person name="Eichler E.E."/>
            <person name="Adams M.D."/>
            <person name="Hunkapiller M.W."/>
            <person name="Myers E.W."/>
            <person name="Venter J.C."/>
        </authorList>
    </citation>
    <scope>NUCLEOTIDE SEQUENCE [LARGE SCALE GENOMIC DNA]</scope>
    <scope>VARIANT ARG-61</scope>
</reference>
<reference key="6">
    <citation type="journal article" date="2004" name="Genome Res.">
        <title>The status, quality, and expansion of the NIH full-length cDNA project: the Mammalian Gene Collection (MGC).</title>
        <authorList>
            <consortium name="The MGC Project Team"/>
        </authorList>
    </citation>
    <scope>NUCLEOTIDE SEQUENCE [LARGE SCALE MRNA] (ISOFORMS 2 AND 3)</scope>
    <scope>VARIANT ARG-61</scope>
    <source>
        <tissue>Placenta</tissue>
        <tissue>Uterus</tissue>
    </source>
</reference>
<reference key="7">
    <citation type="journal article" date="2009" name="EMBO J.">
        <title>ZIP: a novel transcription repressor, represses EGFR oncogene and suppresses breast carcinogenesis.</title>
        <authorList>
            <person name="Li R."/>
            <person name="Zhang H."/>
            <person name="Yu W."/>
            <person name="Chen Y."/>
            <person name="Gui B."/>
            <person name="Liang J."/>
            <person name="Wang Y."/>
            <person name="Sun L."/>
            <person name="Yang X."/>
            <person name="Zhang Y."/>
            <person name="Shi L."/>
            <person name="Li Y."/>
            <person name="Shang Y."/>
        </authorList>
    </citation>
    <scope>FUNCTION</scope>
    <scope>SUBCELLULAR LOCATION</scope>
    <scope>DNA-BINDING</scope>
    <scope>TISSUE SPECIFICITY</scope>
    <scope>INTERACTION WITH CHD4</scope>
</reference>
<reference key="8">
    <citation type="journal article" date="2010" name="J. Biol. Chem.">
        <title>sZIP, an alternative splice variant of ZIP, antagonizes transcription repression and growth inhibition by ZIP.</title>
        <authorList>
            <person name="Yu W."/>
            <person name="Li R."/>
            <person name="Gui B."/>
            <person name="Shang Y."/>
        </authorList>
    </citation>
    <scope>ALTERNATIVE SPLICING (ISOFORM 4)</scope>
    <scope>FUNCTION (ISOFORM 4)</scope>
    <scope>SUBCELLULAR LOCATION (ISOFORM 4)</scope>
</reference>
<reference key="9">
    <citation type="journal article" date="2011" name="BMC Syst. Biol.">
        <title>Initial characterization of the human central proteome.</title>
        <authorList>
            <person name="Burkard T.R."/>
            <person name="Planyavsky M."/>
            <person name="Kaupe I."/>
            <person name="Breitwieser F.P."/>
            <person name="Buerckstuemmer T."/>
            <person name="Bennett K.L."/>
            <person name="Superti-Furga G."/>
            <person name="Colinge J."/>
        </authorList>
    </citation>
    <scope>IDENTIFICATION BY MASS SPECTROMETRY [LARGE SCALE ANALYSIS]</scope>
</reference>
<reference key="10">
    <citation type="journal article" date="2012" name="Proc. Natl. Acad. Sci. U.S.A.">
        <title>N-terminal acetylome analyses and functional insights of the N-terminal acetyltransferase NatB.</title>
        <authorList>
            <person name="Van Damme P."/>
            <person name="Lasa M."/>
            <person name="Polevoda B."/>
            <person name="Gazquez C."/>
            <person name="Elosegui-Artola A."/>
            <person name="Kim D.S."/>
            <person name="De Juan-Pardo E."/>
            <person name="Demeyer K."/>
            <person name="Hole K."/>
            <person name="Larrea E."/>
            <person name="Timmerman E."/>
            <person name="Prieto J."/>
            <person name="Arnesen T."/>
            <person name="Sherman F."/>
            <person name="Gevaert K."/>
            <person name="Aldabe R."/>
        </authorList>
    </citation>
    <scope>ACETYLATION [LARGE SCALE ANALYSIS] AT MET-1</scope>
    <scope>IDENTIFICATION BY MASS SPECTROMETRY [LARGE SCALE ANALYSIS]</scope>
</reference>
<reference key="11">
    <citation type="journal article" date="2013" name="PLoS ONE">
        <title>HIV-1 Vpr Induces the Degradation of ZIP and sZIP, Adaptors of the NuRD Chromatin Remodeling Complex, by Hijacking DCAF1/VprBP.</title>
        <authorList>
            <person name="Maudet C."/>
            <person name="Sourisce A."/>
            <person name="Dragin L."/>
            <person name="Lahouassa H."/>
            <person name="Rain J.C."/>
            <person name="Bouaziz S."/>
            <person name="Ramirez B.C."/>
            <person name="Margottin-Goguet F."/>
        </authorList>
    </citation>
    <scope>UBIQUITINATION</scope>
</reference>
<reference key="12">
    <citation type="submission" date="2013-02" db="PDB data bank">
        <title>Crystal structure of the zinc finger of ZGPAT.</title>
        <authorList>
            <consortium name="Structural genomics consortium (SGC)"/>
        </authorList>
    </citation>
    <scope>X-RAY CRYSTALLOGRAPHY (2.65 ANGSTROMS) OF 120-268 IN COMPLEX WITH ZINC IONS</scope>
</reference>
<gene>
    <name type="primary">ZGPAT</name>
    <name type="synonym">GPATC6</name>
    <name type="synonym">GPATCH6</name>
    <name type="synonym">KIAA1847</name>
    <name type="synonym">ZC3H9</name>
    <name type="synonym">ZC3HDC9</name>
    <name type="synonym">ZIP</name>
</gene>
<feature type="chain" id="PRO_0000213894" description="Zinc finger CCCH-type with G patch domain-containing protein">
    <location>
        <begin position="1"/>
        <end position="531"/>
    </location>
</feature>
<feature type="domain" description="G-patch" evidence="2">
    <location>
        <begin position="333"/>
        <end position="379"/>
    </location>
</feature>
<feature type="zinc finger region" description="C3H1-type" evidence="3">
    <location>
        <begin position="175"/>
        <end position="201"/>
    </location>
</feature>
<feature type="region of interest" description="Disordered" evidence="4">
    <location>
        <begin position="91"/>
        <end position="133"/>
    </location>
</feature>
<feature type="region of interest" description="Disordered" evidence="4">
    <location>
        <begin position="267"/>
        <end position="289"/>
    </location>
</feature>
<feature type="region of interest" description="Disordered" evidence="4">
    <location>
        <begin position="385"/>
        <end position="409"/>
    </location>
</feature>
<feature type="region of interest" description="Disordered" evidence="4">
    <location>
        <begin position="426"/>
        <end position="446"/>
    </location>
</feature>
<feature type="region of interest" description="Disordered" evidence="4">
    <location>
        <begin position="509"/>
        <end position="531"/>
    </location>
</feature>
<feature type="compositionally biased region" description="Low complexity" evidence="4">
    <location>
        <begin position="107"/>
        <end position="117"/>
    </location>
</feature>
<feature type="compositionally biased region" description="Acidic residues" evidence="4">
    <location>
        <begin position="118"/>
        <end position="129"/>
    </location>
</feature>
<feature type="compositionally biased region" description="Low complexity" evidence="4">
    <location>
        <begin position="426"/>
        <end position="438"/>
    </location>
</feature>
<feature type="compositionally biased region" description="Basic and acidic residues" evidence="4">
    <location>
        <begin position="518"/>
        <end position="531"/>
    </location>
</feature>
<feature type="modified residue" description="N-acetylmethionine" evidence="16">
    <location>
        <position position="1"/>
    </location>
</feature>
<feature type="modified residue" description="Phosphoserine" evidence="1">
    <location>
        <position position="373"/>
    </location>
</feature>
<feature type="splice variant" id="VSP_053599" description="In isoform 4." evidence="15">
    <location>
        <begin position="1"/>
        <end position="343"/>
    </location>
</feature>
<feature type="splice variant" id="VSP_038121" description="In isoform 3." evidence="14">
    <location>
        <begin position="282"/>
        <end position="310"/>
    </location>
</feature>
<feature type="splice variant" id="VSP_007754" description="In isoform 2." evidence="13 14">
    <location>
        <begin position="291"/>
        <end position="310"/>
    </location>
</feature>
<feature type="sequence variant" id="VAR_025539" description="In dbSNP:rs1291212." evidence="5 6 7 12">
    <original>S</original>
    <variation>R</variation>
    <location>
        <position position="61"/>
    </location>
</feature>
<feature type="sequence conflict" description="In Ref. 3; BAB55426." evidence="15" ref="3">
    <original>L</original>
    <variation>Q</variation>
    <location>
        <position position="184"/>
    </location>
</feature>
<feature type="sequence conflict" description="In Ref. 3; BAC11317." evidence="15" ref="3">
    <original>C</original>
    <variation>R</variation>
    <location>
        <position position="188"/>
    </location>
</feature>
<feature type="sequence conflict" description="In Ref. 3; BAB55426." evidence="15" ref="3">
    <original>M</original>
    <variation>V</variation>
    <location>
        <position position="344"/>
    </location>
</feature>
<feature type="sequence conflict" description="In Ref. 6; AAH19338." evidence="15" ref="6">
    <original>G</original>
    <variation>R</variation>
    <location>
        <position position="433"/>
    </location>
</feature>
<feature type="sequence conflict" description="In Ref. 3; BAB55426." evidence="15" ref="3">
    <original>Q</original>
    <variation>R</variation>
    <location>
        <position position="519"/>
    </location>
</feature>
<feature type="strand" evidence="17">
    <location>
        <begin position="133"/>
        <end position="138"/>
    </location>
</feature>
<feature type="strand" evidence="17">
    <location>
        <begin position="146"/>
        <end position="157"/>
    </location>
</feature>
<feature type="strand" evidence="17">
    <location>
        <begin position="163"/>
        <end position="171"/>
    </location>
</feature>
<feature type="helix" evidence="17">
    <location>
        <begin position="175"/>
        <end position="177"/>
    </location>
</feature>
<feature type="helix" evidence="17">
    <location>
        <begin position="183"/>
        <end position="185"/>
    </location>
</feature>
<feature type="strand" evidence="17">
    <location>
        <begin position="195"/>
        <end position="197"/>
    </location>
</feature>
<feature type="strand" evidence="17">
    <location>
        <begin position="200"/>
        <end position="203"/>
    </location>
</feature>
<feature type="helix" evidence="17">
    <location>
        <begin position="204"/>
        <end position="206"/>
    </location>
</feature>
<feature type="strand" evidence="17">
    <location>
        <begin position="223"/>
        <end position="227"/>
    </location>
</feature>
<feature type="strand" evidence="17">
    <location>
        <begin position="233"/>
        <end position="244"/>
    </location>
</feature>
<feature type="strand" evidence="17">
    <location>
        <begin position="246"/>
        <end position="252"/>
    </location>
</feature>
<feature type="strand" evidence="17">
    <location>
        <begin position="258"/>
        <end position="260"/>
    </location>
</feature>
<feature type="helix" evidence="17">
    <location>
        <begin position="262"/>
        <end position="264"/>
    </location>
</feature>
<accession>Q8N5A5</accession>
<accession>E1P5K1</accession>
<accession>Q4VXN9</accession>
<accession>Q5JWI9</accession>
<accession>Q5JWJ0</accession>
<accession>Q8NC55</accession>
<accession>Q8WUV4</accession>
<accession>Q96JI0</accession>
<accession>Q96JU4</accession>
<accession>Q9H401</accession>
<evidence type="ECO:0000250" key="1">
    <source>
        <dbReference type="UniProtKB" id="Q8VDM1"/>
    </source>
</evidence>
<evidence type="ECO:0000255" key="2">
    <source>
        <dbReference type="PROSITE-ProRule" id="PRU00092"/>
    </source>
</evidence>
<evidence type="ECO:0000255" key="3">
    <source>
        <dbReference type="PROSITE-ProRule" id="PRU00723"/>
    </source>
</evidence>
<evidence type="ECO:0000256" key="4">
    <source>
        <dbReference type="SAM" id="MobiDB-lite"/>
    </source>
</evidence>
<evidence type="ECO:0000269" key="5">
    <source>
    </source>
</evidence>
<evidence type="ECO:0000269" key="6">
    <source>
    </source>
</evidence>
<evidence type="ECO:0000269" key="7">
    <source>
    </source>
</evidence>
<evidence type="ECO:0000269" key="8">
    <source>
    </source>
</evidence>
<evidence type="ECO:0000269" key="9">
    <source>
    </source>
</evidence>
<evidence type="ECO:0000269" key="10">
    <source>
    </source>
</evidence>
<evidence type="ECO:0000269" key="11">
    <source ref="12"/>
</evidence>
<evidence type="ECO:0000269" key="12">
    <source ref="5"/>
</evidence>
<evidence type="ECO:0000303" key="13">
    <source>
    </source>
</evidence>
<evidence type="ECO:0000303" key="14">
    <source>
    </source>
</evidence>
<evidence type="ECO:0000305" key="15"/>
<evidence type="ECO:0007744" key="16">
    <source>
    </source>
</evidence>
<evidence type="ECO:0007829" key="17">
    <source>
        <dbReference type="PDB" id="4II1"/>
    </source>
</evidence>
<comment type="function">
    <text evidence="8">Transcription repressor that specifically binds the 5'-GGAG[GA]A[GA]A-3' consensus sequence. Represses transcription by recruiting the chromatin multiprotein complex NuRD to target promoters. Negatively regulates expression of EGFR, a gene involved in cell proliferation, survival and migration. Its ability to repress genes of the EGFR pathway suggest it may act as a tumor suppressor. Able to suppress breast carcinogenesis.</text>
</comment>
<comment type="function">
    <molecule>Isoform 4</molecule>
    <text evidence="8">Antagonizes the transcription repression by isoform 1 by competing for the binding of the NuRD complex. Does not bind DNA.</text>
</comment>
<comment type="subunit">
    <text evidence="8 11">Interacts with CHD4/Mi-2; the interaction is direct.</text>
</comment>
<comment type="interaction">
    <interactant intactId="EBI-3439227">
        <id>Q8N5A5</id>
    </interactant>
    <interactant intactId="EBI-745226">
        <id>Q13155</id>
        <label>AIMP2</label>
    </interactant>
    <organismsDiffer>false</organismsDiffer>
    <experiments>3</experiments>
</comment>
<comment type="interaction">
    <interactant intactId="EBI-3439227">
        <id>Q8N5A5</id>
    </interactant>
    <interactant intactId="EBI-10187270">
        <id>Q9Y2J4-4</id>
        <label>AMOTL2</label>
    </interactant>
    <organismsDiffer>false</organismsDiffer>
    <experiments>3</experiments>
</comment>
<comment type="interaction">
    <interactant intactId="EBI-3439227">
        <id>Q8N5A5</id>
    </interactant>
    <interactant intactId="EBI-724373">
        <id>Q7L4P6</id>
        <label>BEND5</label>
    </interactant>
    <organismsDiffer>false</organismsDiffer>
    <experiments>3</experiments>
</comment>
<comment type="interaction">
    <interactant intactId="EBI-3439227">
        <id>Q8N5A5</id>
    </interactant>
    <interactant intactId="EBI-2548012">
        <id>Q9H2G9</id>
        <label>BLZF1</label>
    </interactant>
    <organismsDiffer>false</organismsDiffer>
    <experiments>3</experiments>
</comment>
<comment type="interaction">
    <interactant intactId="EBI-3439227">
        <id>Q8N5A5</id>
    </interactant>
    <interactant intactId="EBI-2808286">
        <id>Q2TAC2</id>
        <label>CCDC57</label>
    </interactant>
    <organismsDiffer>false</organismsDiffer>
    <experiments>3</experiments>
</comment>
<comment type="interaction">
    <interactant intactId="EBI-3439227">
        <id>Q8N5A5</id>
    </interactant>
    <interactant intactId="EBI-748961">
        <id>O95273</id>
        <label>CCNDBP1</label>
    </interactant>
    <organismsDiffer>false</organismsDiffer>
    <experiments>4</experiments>
</comment>
<comment type="interaction">
    <interactant intactId="EBI-3439227">
        <id>Q8N5A5</id>
    </interactant>
    <interactant intactId="EBI-739624">
        <id>Q8NHQ1</id>
        <label>CEP70</label>
    </interactant>
    <organismsDiffer>false</organismsDiffer>
    <experiments>4</experiments>
</comment>
<comment type="interaction">
    <interactant intactId="EBI-3439227">
        <id>Q8N5A5</id>
    </interactant>
    <interactant intactId="EBI-1237044">
        <id>O43143</id>
        <label>DHX15</label>
    </interactant>
    <organismsDiffer>false</organismsDiffer>
    <experiments>6</experiments>
</comment>
<comment type="interaction">
    <interactant intactId="EBI-3439227">
        <id>Q8N5A5</id>
    </interactant>
    <interactant intactId="EBI-740680">
        <id>Q8WWB3</id>
        <label>DYDC1</label>
    </interactant>
    <organismsDiffer>false</organismsDiffer>
    <experiments>3</experiments>
</comment>
<comment type="interaction">
    <interactant intactId="EBI-3439227">
        <id>Q8N5A5</id>
    </interactant>
    <interactant intactId="EBI-10175124">
        <id>Q8IZU0</id>
        <label>FAM9B</label>
    </interactant>
    <organismsDiffer>false</organismsDiffer>
    <experiments>3</experiments>
</comment>
<comment type="interaction">
    <interactant intactId="EBI-3439227">
        <id>Q8N5A5</id>
    </interactant>
    <interactant intactId="EBI-618309">
        <id>Q08379</id>
        <label>GOLGA2</label>
    </interactant>
    <organismsDiffer>false</organismsDiffer>
    <experiments>3</experiments>
</comment>
<comment type="interaction">
    <interactant intactId="EBI-3439227">
        <id>Q8N5A5</id>
    </interactant>
    <interactant intactId="EBI-747204">
        <id>Q9UKT9</id>
        <label>IKZF3</label>
    </interactant>
    <organismsDiffer>false</organismsDiffer>
    <experiments>3</experiments>
</comment>
<comment type="interaction">
    <interactant intactId="EBI-3439227">
        <id>Q8N5A5</id>
    </interactant>
    <interactant intactId="EBI-2125614">
        <id>Q9BVG8</id>
        <label>KIFC3</label>
    </interactant>
    <organismsDiffer>false</organismsDiffer>
    <experiments>4</experiments>
</comment>
<comment type="interaction">
    <interactant intactId="EBI-3439227">
        <id>Q8N5A5</id>
    </interactant>
    <interactant intactId="EBI-739566">
        <id>P19012</id>
        <label>KRT15</label>
    </interactant>
    <organismsDiffer>false</organismsDiffer>
    <experiments>3</experiments>
</comment>
<comment type="interaction">
    <interactant intactId="EBI-3439227">
        <id>Q8N5A5</id>
    </interactant>
    <interactant intactId="EBI-10171697">
        <id>Q6A162</id>
        <label>KRT40</label>
    </interactant>
    <organismsDiffer>false</organismsDiffer>
    <experiments>3</experiments>
</comment>
<comment type="interaction">
    <interactant intactId="EBI-3439227">
        <id>Q8N5A5</id>
    </interactant>
    <interactant intactId="EBI-740738">
        <id>O95751</id>
        <label>LDOC1</label>
    </interactant>
    <organismsDiffer>false</organismsDiffer>
    <experiments>5</experiments>
</comment>
<comment type="interaction">
    <interactant intactId="EBI-3439227">
        <id>Q8N5A5</id>
    </interactant>
    <interactant intactId="EBI-741037">
        <id>Q9BRK4</id>
        <label>LZTS2</label>
    </interactant>
    <organismsDiffer>false</organismsDiffer>
    <experiments>3</experiments>
</comment>
<comment type="interaction">
    <interactant intactId="EBI-3439227">
        <id>Q8N5A5</id>
    </interactant>
    <interactant intactId="EBI-10172526">
        <id>Q9UJV3-2</id>
        <label>MID2</label>
    </interactant>
    <organismsDiffer>false</organismsDiffer>
    <experiments>3</experiments>
</comment>
<comment type="interaction">
    <interactant intactId="EBI-3439227">
        <id>Q8N5A5</id>
    </interactant>
    <interactant intactId="EBI-2548751">
        <id>Q8TD10</id>
        <label>MIPOL1</label>
    </interactant>
    <organismsDiffer>false</organismsDiffer>
    <experiments>3</experiments>
</comment>
<comment type="interaction">
    <interactant intactId="EBI-3439227">
        <id>Q8N5A5</id>
    </interactant>
    <interactant intactId="EBI-713786">
        <id>Q8IXK0</id>
        <label>PHC2</label>
    </interactant>
    <organismsDiffer>false</organismsDiffer>
    <experiments>3</experiments>
</comment>
<comment type="interaction">
    <interactant intactId="EBI-3439227">
        <id>Q8N5A5</id>
    </interactant>
    <interactant intactId="EBI-2212028">
        <id>Q9Y2D8</id>
        <label>SSX2IP</label>
    </interactant>
    <organismsDiffer>false</organismsDiffer>
    <experiments>4</experiments>
</comment>
<comment type="interaction">
    <interactant intactId="EBI-3439227">
        <id>Q8N5A5</id>
    </interactant>
    <interactant intactId="EBI-745680">
        <id>Q96MF2</id>
        <label>STAC3</label>
    </interactant>
    <organismsDiffer>false</organismsDiffer>
    <experiments>3</experiments>
</comment>
<comment type="interaction">
    <interactant intactId="EBI-3439227">
        <id>Q8N5A5</id>
    </interactant>
    <interactant intactId="EBI-1105213">
        <id>Q9UBB9</id>
        <label>TFIP11</label>
    </interactant>
    <organismsDiffer>false</organismsDiffer>
    <experiments>5</experiments>
</comment>
<comment type="interaction">
    <interactant intactId="EBI-3439227">
        <id>Q8N5A5</id>
    </interactant>
    <interactant intactId="EBI-717810">
        <id>Q08117</id>
        <label>TLE5</label>
    </interactant>
    <organismsDiffer>false</organismsDiffer>
    <experiments>4</experiments>
</comment>
<comment type="interaction">
    <interactant intactId="EBI-3439227">
        <id>Q8N5A5</id>
    </interactant>
    <interactant intactId="EBI-10175039">
        <id>Q13625-3</id>
        <label>TP53BP2</label>
    </interactant>
    <organismsDiffer>false</organismsDiffer>
    <experiments>3</experiments>
</comment>
<comment type="interaction">
    <interactant intactId="EBI-3439227">
        <id>Q8N5A5</id>
    </interactant>
    <interactant intactId="EBI-719493">
        <id>P14373</id>
        <label>TRIM27</label>
    </interactant>
    <organismsDiffer>false</organismsDiffer>
    <experiments>4</experiments>
</comment>
<comment type="interaction">
    <interactant intactId="EBI-3439227">
        <id>Q8N5A5</id>
    </interactant>
    <interactant intactId="EBI-2130429">
        <id>Q9BYV2</id>
        <label>TRIM54</label>
    </interactant>
    <organismsDiffer>false</organismsDiffer>
    <experiments>3</experiments>
</comment>
<comment type="interaction">
    <interactant intactId="EBI-3439227">
        <id>Q8N5A5</id>
    </interactant>
    <interactant intactId="EBI-742740">
        <id>Q96BR9</id>
        <label>ZBTB8A</label>
    </interactant>
    <organismsDiffer>false</organismsDiffer>
    <experiments>3</experiments>
</comment>
<comment type="interaction">
    <interactant intactId="EBI-10183064">
        <id>Q8N5A5-2</id>
    </interactant>
    <interactant intactId="EBI-745226">
        <id>Q13155</id>
        <label>AIMP2</label>
    </interactant>
    <organismsDiffer>false</organismsDiffer>
    <experiments>12</experiments>
</comment>
<comment type="interaction">
    <interactant intactId="EBI-10183064">
        <id>Q8N5A5-2</id>
    </interactant>
    <interactant intactId="EBI-746752">
        <id>Q9Y2J4</id>
        <label>AMOTL2</label>
    </interactant>
    <organismsDiffer>false</organismsDiffer>
    <experiments>3</experiments>
</comment>
<comment type="interaction">
    <interactant intactId="EBI-10183064">
        <id>Q8N5A5-2</id>
    </interactant>
    <interactant intactId="EBI-10187270">
        <id>Q9Y2J4-4</id>
        <label>AMOTL2</label>
    </interactant>
    <organismsDiffer>false</organismsDiffer>
    <experiments>3</experiments>
</comment>
<comment type="interaction">
    <interactant intactId="EBI-10183064">
        <id>Q8N5A5-2</id>
    </interactant>
    <interactant intactId="EBI-2548012">
        <id>Q9H2G9</id>
        <label>BLZF1</label>
    </interactant>
    <organismsDiffer>false</organismsDiffer>
    <experiments>6</experiments>
</comment>
<comment type="interaction">
    <interactant intactId="EBI-10183064">
        <id>Q8N5A5-2</id>
    </interactant>
    <interactant intactId="EBI-3844053">
        <id>Q13901</id>
        <label>C1D</label>
    </interactant>
    <organismsDiffer>false</organismsDiffer>
    <experiments>3</experiments>
</comment>
<comment type="interaction">
    <interactant intactId="EBI-10183064">
        <id>Q8N5A5-2</id>
    </interactant>
    <interactant intactId="EBI-11530605">
        <id>Q9H257-2</id>
        <label>CARD9</label>
    </interactant>
    <organismsDiffer>false</organismsDiffer>
    <experiments>3</experiments>
</comment>
<comment type="interaction">
    <interactant intactId="EBI-10183064">
        <id>Q8N5A5-2</id>
    </interactant>
    <interactant intactId="EBI-12836558">
        <id>Q5BKX8</id>
        <label>CAVIN4</label>
    </interactant>
    <organismsDiffer>false</organismsDiffer>
    <experiments>3</experiments>
</comment>
<comment type="interaction">
    <interactant intactId="EBI-10183064">
        <id>Q8N5A5-2</id>
    </interactant>
    <interactant intactId="EBI-10961312">
        <id>Q8IYE1</id>
        <label>CCDC13</label>
    </interactant>
    <organismsDiffer>false</organismsDiffer>
    <experiments>3</experiments>
</comment>
<comment type="interaction">
    <interactant intactId="EBI-10183064">
        <id>Q8N5A5-2</id>
    </interactant>
    <interactant intactId="EBI-10181422">
        <id>A0A1B0GWI1</id>
        <label>CCDC196</label>
    </interactant>
    <organismsDiffer>false</organismsDiffer>
    <experiments>3</experiments>
</comment>
<comment type="interaction">
    <interactant intactId="EBI-10183064">
        <id>Q8N5A5-2</id>
    </interactant>
    <interactant intactId="EBI-10961624">
        <id>Q2TAC2-2</id>
        <label>CCDC57</label>
    </interactant>
    <organismsDiffer>false</organismsDiffer>
    <experiments>3</experiments>
</comment>
<comment type="interaction">
    <interactant intactId="EBI-10183064">
        <id>Q8N5A5-2</id>
    </interactant>
    <interactant intactId="EBI-10175300">
        <id>Q8TD31-3</id>
        <label>CCHCR1</label>
    </interactant>
    <organismsDiffer>false</organismsDiffer>
    <experiments>3</experiments>
</comment>
<comment type="interaction">
    <interactant intactId="EBI-10183064">
        <id>Q8N5A5-2</id>
    </interactant>
    <interactant intactId="EBI-5278764">
        <id>Q96GN5</id>
        <label>CDCA7L</label>
    </interactant>
    <organismsDiffer>false</organismsDiffer>
    <experiments>9</experiments>
</comment>
<comment type="interaction">
    <interactant intactId="EBI-10183064">
        <id>Q8N5A5-2</id>
    </interactant>
    <interactant intactId="EBI-1181367">
        <id>Q01850</id>
        <label>CDR2</label>
    </interactant>
    <organismsDiffer>false</organismsDiffer>
    <experiments>6</experiments>
</comment>
<comment type="interaction">
    <interactant intactId="EBI-10183064">
        <id>Q8N5A5-2</id>
    </interactant>
    <interactant intactId="EBI-739624">
        <id>Q8NHQ1</id>
        <label>CEP70</label>
    </interactant>
    <organismsDiffer>false</organismsDiffer>
    <experiments>9</experiments>
</comment>
<comment type="interaction">
    <interactant intactId="EBI-10183064">
        <id>Q8N5A5-2</id>
    </interactant>
    <interactant intactId="EBI-741671">
        <id>Q969H4</id>
        <label>CNKSR1</label>
    </interactant>
    <organismsDiffer>false</organismsDiffer>
    <experiments>3</experiments>
</comment>
<comment type="interaction">
    <interactant intactId="EBI-10183064">
        <id>Q8N5A5-2</id>
    </interactant>
    <interactant intactId="EBI-11962928">
        <id>Q9UI47-2</id>
        <label>CTNNA3</label>
    </interactant>
    <organismsDiffer>false</organismsDiffer>
    <experiments>3</experiments>
</comment>
<comment type="interaction">
    <interactant intactId="EBI-10183064">
        <id>Q8N5A5-2</id>
    </interactant>
    <interactant intactId="EBI-1237044">
        <id>O43143</id>
        <label>DHX15</label>
    </interactant>
    <organismsDiffer>false</organismsDiffer>
    <experiments>12</experiments>
</comment>
<comment type="interaction">
    <interactant intactId="EBI-10183064">
        <id>Q8N5A5-2</id>
    </interactant>
    <interactant intactId="EBI-12089140">
        <id>A0A0A0MR80</id>
        <label>EP400</label>
    </interactant>
    <organismsDiffer>false</organismsDiffer>
    <experiments>3</experiments>
</comment>
<comment type="interaction">
    <interactant intactId="EBI-10183064">
        <id>Q8N5A5-2</id>
    </interactant>
    <interactant intactId="EBI-10175124">
        <id>Q8IZU0</id>
        <label>FAM9B</label>
    </interactant>
    <organismsDiffer>false</organismsDiffer>
    <experiments>3</experiments>
</comment>
<comment type="interaction">
    <interactant intactId="EBI-10183064">
        <id>Q8N5A5-2</id>
    </interactant>
    <interactant intactId="EBI-923440">
        <id>Q8WXI9</id>
        <label>GATAD2B</label>
    </interactant>
    <organismsDiffer>false</organismsDiffer>
    <experiments>3</experiments>
</comment>
<comment type="interaction">
    <interactant intactId="EBI-10183064">
        <id>Q8N5A5-2</id>
    </interactant>
    <interactant intactId="EBI-618309">
        <id>Q08379</id>
        <label>GOLGA2</label>
    </interactant>
    <organismsDiffer>false</organismsDiffer>
    <experiments>12</experiments>
</comment>
<comment type="interaction">
    <interactant intactId="EBI-10183064">
        <id>Q8N5A5-2</id>
    </interactant>
    <interactant intactId="EBI-5916454">
        <id>A6NEM1</id>
        <label>GOLGA6L9</label>
    </interactant>
    <organismsDiffer>false</organismsDiffer>
    <experiments>3</experiments>
</comment>
<comment type="interaction">
    <interactant intactId="EBI-10183064">
        <id>Q8N5A5-2</id>
    </interactant>
    <interactant intactId="EBI-10961706">
        <id>Q96ED9-2</id>
        <label>HOOK2</label>
    </interactant>
    <organismsDiffer>false</organismsDiffer>
    <experiments>3</experiments>
</comment>
<comment type="interaction">
    <interactant intactId="EBI-10183064">
        <id>Q8N5A5-2</id>
    </interactant>
    <interactant intactId="EBI-7116203">
        <id>O75031</id>
        <label>HSF2BP</label>
    </interactant>
    <organismsDiffer>false</organismsDiffer>
    <experiments>3</experiments>
</comment>
<comment type="interaction">
    <interactant intactId="EBI-10183064">
        <id>Q8N5A5-2</id>
    </interactant>
    <interactant intactId="EBI-747204">
        <id>Q9UKT9</id>
        <label>IKZF3</label>
    </interactant>
    <organismsDiffer>false</organismsDiffer>
    <experiments>3</experiments>
</comment>
<comment type="interaction">
    <interactant intactId="EBI-10183064">
        <id>Q8N5A5-2</id>
    </interactant>
    <interactant intactId="EBI-3437878">
        <id>Q86T90</id>
        <label>KIAA1328</label>
    </interactant>
    <organismsDiffer>false</organismsDiffer>
    <experiments>5</experiments>
</comment>
<comment type="interaction">
    <interactant intactId="EBI-10183064">
        <id>Q8N5A5-2</id>
    </interactant>
    <interactant intactId="EBI-2125614">
        <id>Q9BVG8</id>
        <label>KIFC3</label>
    </interactant>
    <organismsDiffer>false</organismsDiffer>
    <experiments>3</experiments>
</comment>
<comment type="interaction">
    <interactant intactId="EBI-10183064">
        <id>Q8N5A5-2</id>
    </interactant>
    <interactant intactId="EBI-14069005">
        <id>Q9BVG8-5</id>
        <label>KIFC3</label>
    </interactant>
    <organismsDiffer>false</organismsDiffer>
    <experiments>6</experiments>
</comment>
<comment type="interaction">
    <interactant intactId="EBI-10183064">
        <id>Q8N5A5-2</id>
    </interactant>
    <interactant intactId="EBI-739566">
        <id>P19012</id>
        <label>KRT15</label>
    </interactant>
    <organismsDiffer>false</organismsDiffer>
    <experiments>3</experiments>
</comment>
<comment type="interaction">
    <interactant intactId="EBI-10183064">
        <id>Q8N5A5-2</id>
    </interactant>
    <interactant intactId="EBI-948001">
        <id>Q15323</id>
        <label>KRT31</label>
    </interactant>
    <organismsDiffer>false</organismsDiffer>
    <experiments>3</experiments>
</comment>
<comment type="interaction">
    <interactant intactId="EBI-10183064">
        <id>Q8N5A5-2</id>
    </interactant>
    <interactant intactId="EBI-10171697">
        <id>Q6A162</id>
        <label>KRT40</label>
    </interactant>
    <organismsDiffer>false</organismsDiffer>
    <experiments>6</experiments>
</comment>
<comment type="interaction">
    <interactant intactId="EBI-10183064">
        <id>Q8N5A5-2</id>
    </interactant>
    <interactant intactId="EBI-8473670">
        <id>O95447</id>
        <label>LCA5L</label>
    </interactant>
    <organismsDiffer>false</organismsDiffer>
    <experiments>3</experiments>
</comment>
<comment type="interaction">
    <interactant intactId="EBI-10183064">
        <id>Q8N5A5-2</id>
    </interactant>
    <interactant intactId="EBI-740738">
        <id>O95751</id>
        <label>LDOC1</label>
    </interactant>
    <organismsDiffer>false</organismsDiffer>
    <experiments>3</experiments>
</comment>
<comment type="interaction">
    <interactant intactId="EBI-10183064">
        <id>Q8N5A5-2</id>
    </interactant>
    <interactant intactId="EBI-739832">
        <id>Q8TBB1</id>
        <label>LNX1</label>
    </interactant>
    <organismsDiffer>false</organismsDiffer>
    <experiments>3</experiments>
</comment>
<comment type="interaction">
    <interactant intactId="EBI-10183064">
        <id>Q8N5A5-2</id>
    </interactant>
    <interactant intactId="EBI-1216080">
        <id>Q9Y250</id>
        <label>LZTS1</label>
    </interactant>
    <organismsDiffer>false</organismsDiffer>
    <experiments>3</experiments>
</comment>
<comment type="interaction">
    <interactant intactId="EBI-10183064">
        <id>Q8N5A5-2</id>
    </interactant>
    <interactant intactId="EBI-741037">
        <id>Q9BRK4</id>
        <label>LZTS2</label>
    </interactant>
    <organismsDiffer>false</organismsDiffer>
    <experiments>9</experiments>
</comment>
<comment type="interaction">
    <interactant intactId="EBI-10183064">
        <id>Q8N5A5-2</id>
    </interactant>
    <interactant intactId="EBI-10172526">
        <id>Q9UJV3-2</id>
        <label>MID2</label>
    </interactant>
    <organismsDiffer>false</organismsDiffer>
    <experiments>9</experiments>
</comment>
<comment type="interaction">
    <interactant intactId="EBI-10183064">
        <id>Q8N5A5-2</id>
    </interactant>
    <interactant intactId="EBI-2548751">
        <id>Q8TD10</id>
        <label>MIPOL1</label>
    </interactant>
    <organismsDiffer>false</organismsDiffer>
    <experiments>6</experiments>
</comment>
<comment type="interaction">
    <interactant intactId="EBI-10183064">
        <id>Q8N5A5-2</id>
    </interactant>
    <interactant intactId="EBI-743811">
        <id>Q8NEH6</id>
        <label>MNS1</label>
    </interactant>
    <organismsDiffer>false</organismsDiffer>
    <experiments>3</experiments>
</comment>
<comment type="interaction">
    <interactant intactId="EBI-10183064">
        <id>Q8N5A5-2</id>
    </interactant>
    <interactant intactId="EBI-2880203">
        <id>O76041</id>
        <label>NEBL</label>
    </interactant>
    <organismsDiffer>false</organismsDiffer>
    <experiments>3</experiments>
</comment>
<comment type="interaction">
    <interactant intactId="EBI-10183064">
        <id>Q8N5A5-2</id>
    </interactant>
    <interactant intactId="EBI-748974">
        <id>Q96CV9</id>
        <label>OPTN</label>
    </interactant>
    <organismsDiffer>false</organismsDiffer>
    <experiments>3</experiments>
</comment>
<comment type="interaction">
    <interactant intactId="EBI-10183064">
        <id>Q8N5A5-2</id>
    </interactant>
    <interactant intactId="EBI-713786">
        <id>Q8IXK0</id>
        <label>PHC2</label>
    </interactant>
    <organismsDiffer>false</organismsDiffer>
    <experiments>3</experiments>
</comment>
<comment type="interaction">
    <interactant intactId="EBI-10183064">
        <id>Q8N5A5-2</id>
    </interactant>
    <interactant intactId="EBI-1105153">
        <id>Q96KQ4</id>
        <label>PPP1R13B</label>
    </interactant>
    <organismsDiffer>false</organismsDiffer>
    <experiments>3</experiments>
</comment>
<comment type="interaction">
    <interactant intactId="EBI-10183064">
        <id>Q8N5A5-2</id>
    </interactant>
    <interactant intactId="EBI-717048">
        <id>P60903</id>
        <label>S100A10</label>
    </interactant>
    <organismsDiffer>false</organismsDiffer>
    <experiments>3</experiments>
</comment>
<comment type="interaction">
    <interactant intactId="EBI-10183064">
        <id>Q8N5A5-2</id>
    </interactant>
    <interactant intactId="EBI-748391">
        <id>Q9BWG6</id>
        <label>SCNM1</label>
    </interactant>
    <organismsDiffer>false</organismsDiffer>
    <experiments>3</experiments>
</comment>
<comment type="interaction">
    <interactant intactId="EBI-10183064">
        <id>Q8N5A5-2</id>
    </interactant>
    <interactant intactId="EBI-748621">
        <id>Q9UJW9</id>
        <label>SERTAD3</label>
    </interactant>
    <organismsDiffer>false</organismsDiffer>
    <experiments>3</experiments>
</comment>
<comment type="interaction">
    <interactant intactId="EBI-10183064">
        <id>Q8N5A5-2</id>
    </interactant>
    <interactant intactId="EBI-876439">
        <id>P09661</id>
        <label>SNRPA1</label>
    </interactant>
    <organismsDiffer>false</organismsDiffer>
    <experiments>3</experiments>
</comment>
<comment type="interaction">
    <interactant intactId="EBI-10183064">
        <id>Q8N5A5-2</id>
    </interactant>
    <interactant intactId="EBI-2212028">
        <id>Q9Y2D8</id>
        <label>SSX2IP</label>
    </interactant>
    <organismsDiffer>false</organismsDiffer>
    <experiments>3</experiments>
</comment>
<comment type="interaction">
    <interactant intactId="EBI-10183064">
        <id>Q8N5A5-2</id>
    </interactant>
    <interactant intactId="EBI-745680">
        <id>Q96MF2</id>
        <label>STAC3</label>
    </interactant>
    <organismsDiffer>false</organismsDiffer>
    <experiments>3</experiments>
</comment>
<comment type="interaction">
    <interactant intactId="EBI-10183064">
        <id>Q8N5A5-2</id>
    </interactant>
    <interactant intactId="EBI-18173581">
        <id>Q86TJ2-3</id>
        <label>TADA2B</label>
    </interactant>
    <organismsDiffer>false</organismsDiffer>
    <experiments>3</experiments>
</comment>
<comment type="interaction">
    <interactant intactId="EBI-10183064">
        <id>Q8N5A5-2</id>
    </interactant>
    <interactant intactId="EBI-7413767">
        <id>Q9Y242</id>
        <label>TCF19</label>
    </interactant>
    <organismsDiffer>false</organismsDiffer>
    <experiments>3</experiments>
</comment>
<comment type="interaction">
    <interactant intactId="EBI-10183064">
        <id>Q8N5A5-2</id>
    </interactant>
    <interactant intactId="EBI-1105213">
        <id>Q9UBB9</id>
        <label>TFIP11</label>
    </interactant>
    <organismsDiffer>false</organismsDiffer>
    <experiments>9</experiments>
</comment>
<comment type="interaction">
    <interactant intactId="EBI-10183064">
        <id>Q8N5A5-2</id>
    </interactant>
    <interactant intactId="EBI-741515">
        <id>Q9NVV9</id>
        <label>THAP1</label>
    </interactant>
    <organismsDiffer>false</organismsDiffer>
    <experiments>3</experiments>
</comment>
<comment type="interaction">
    <interactant intactId="EBI-10183064">
        <id>Q8N5A5-2</id>
    </interactant>
    <interactant intactId="EBI-3925505">
        <id>Q8TBB0</id>
        <label>THAP6</label>
    </interactant>
    <organismsDiffer>false</organismsDiffer>
    <experiments>3</experiments>
</comment>
<comment type="interaction">
    <interactant intactId="EBI-10183064">
        <id>Q8N5A5-2</id>
    </interactant>
    <interactant intactId="EBI-717810">
        <id>Q08117</id>
        <label>TLE5</label>
    </interactant>
    <organismsDiffer>false</organismsDiffer>
    <experiments>3</experiments>
</comment>
<comment type="interaction">
    <interactant intactId="EBI-10183064">
        <id>Q8N5A5-2</id>
    </interactant>
    <interactant intactId="EBI-11741437">
        <id>Q08117-2</id>
        <label>TLE5</label>
    </interactant>
    <organismsDiffer>false</organismsDiffer>
    <experiments>9</experiments>
</comment>
<comment type="interaction">
    <interactant intactId="EBI-10183064">
        <id>Q8N5A5-2</id>
    </interactant>
    <interactant intactId="EBI-11952721">
        <id>Q05BL1</id>
        <label>TP53BP2</label>
    </interactant>
    <organismsDiffer>false</organismsDiffer>
    <experiments>6</experiments>
</comment>
<comment type="interaction">
    <interactant intactId="EBI-10183064">
        <id>Q8N5A5-2</id>
    </interactant>
    <interactant intactId="EBI-10175039">
        <id>Q13625-3</id>
        <label>TP53BP2</label>
    </interactant>
    <organismsDiffer>false</organismsDiffer>
    <experiments>3</experiments>
</comment>
<comment type="interaction">
    <interactant intactId="EBI-10183064">
        <id>Q8N5A5-2</id>
    </interactant>
    <interactant intactId="EBI-2820256">
        <id>Q14142</id>
        <label>TRIM14</label>
    </interactant>
    <organismsDiffer>false</organismsDiffer>
    <experiments>3</experiments>
</comment>
<comment type="interaction">
    <interactant intactId="EBI-10183064">
        <id>Q8N5A5-2</id>
    </interactant>
    <interactant intactId="EBI-719493">
        <id>P14373</id>
        <label>TRIM27</label>
    </interactant>
    <organismsDiffer>false</organismsDiffer>
    <experiments>9</experiments>
</comment>
<comment type="interaction">
    <interactant intactId="EBI-10183064">
        <id>Q8N5A5-2</id>
    </interactant>
    <interactant intactId="EBI-11524408">
        <id>Q5T124-6</id>
        <label>UBXN11</label>
    </interactant>
    <organismsDiffer>false</organismsDiffer>
    <experiments>3</experiments>
</comment>
<comment type="interaction">
    <interactant intactId="EBI-10183064">
        <id>Q8N5A5-2</id>
    </interactant>
    <interactant intactId="EBI-12275374">
        <id>Q5TFG8</id>
        <label>ZC2HC1B</label>
    </interactant>
    <organismsDiffer>false</organismsDiffer>
    <experiments>3</experiments>
</comment>
<comment type="interaction">
    <interactant intactId="EBI-10183064">
        <id>Q8N5A5-2</id>
    </interactant>
    <interactant intactId="EBI-12272076">
        <id>Q13360-2</id>
        <label>ZNF177</label>
    </interactant>
    <organismsDiffer>false</organismsDiffer>
    <experiments>3</experiments>
</comment>
<comment type="interaction">
    <interactant intactId="EBI-10183064">
        <id>Q8N5A5-2</id>
    </interactant>
    <interactant intactId="EBI-707773">
        <id>P17028</id>
        <label>ZNF24</label>
    </interactant>
    <organismsDiffer>false</organismsDiffer>
    <experiments>3</experiments>
</comment>
<comment type="interaction">
    <interactant intactId="EBI-10183064">
        <id>Q8N5A5-2</id>
    </interactant>
    <interactant intactId="EBI-7233259">
        <id>Q86UD4</id>
        <label>ZNF329</label>
    </interactant>
    <organismsDiffer>false</organismsDiffer>
    <experiments>3</experiments>
</comment>
<comment type="interaction">
    <interactant intactId="EBI-10183064">
        <id>Q8N5A5-2</id>
    </interactant>
    <interactant intactId="EBI-11041653">
        <id>P13682</id>
        <label>ZNF35</label>
    </interactant>
    <organismsDiffer>false</organismsDiffer>
    <experiments>3</experiments>
</comment>
<comment type="interaction">
    <interactant intactId="EBI-10183064">
        <id>Q8N5A5-2</id>
    </interactant>
    <interactant intactId="EBI-743265">
        <id>Q9BUY5</id>
        <label>ZNF426</label>
    </interactant>
    <organismsDiffer>false</organismsDiffer>
    <experiments>3</experiments>
</comment>
<comment type="interaction">
    <interactant intactId="EBI-10183064">
        <id>Q8N5A5-2</id>
    </interactant>
    <interactant intactId="EBI-6427977">
        <id>Q96SQ5</id>
        <label>ZNF587</label>
    </interactant>
    <organismsDiffer>false</organismsDiffer>
    <experiments>3</experiments>
</comment>
<comment type="interaction">
    <interactant intactId="EBI-10183064">
        <id>Q8N5A5-2</id>
    </interactant>
    <interactant intactId="EBI-4395732">
        <id>P0C7X2</id>
        <label>ZNF688</label>
    </interactant>
    <organismsDiffer>false</organismsDiffer>
    <experiments>3</experiments>
</comment>
<comment type="interaction">
    <interactant intactId="EBI-10183064">
        <id>Q8N5A5-2</id>
    </interactant>
    <interactant intactId="EBI-7138235">
        <id>Q9NQZ8</id>
        <label>ZNF71</label>
    </interactant>
    <organismsDiffer>false</organismsDiffer>
    <experiments>3</experiments>
</comment>
<comment type="interaction">
    <interactant intactId="EBI-10183064">
        <id>Q8N5A5-2</id>
    </interactant>
    <interactant intactId="EBI-10178224">
        <id>P10073</id>
        <label>ZSCAN22</label>
    </interactant>
    <organismsDiffer>false</organismsDiffer>
    <experiments>3</experiments>
</comment>
<comment type="interaction">
    <interactant intactId="EBI-10183064">
        <id>Q8N5A5-2</id>
    </interactant>
    <interactant intactId="EBI-17493569">
        <id>P98169</id>
        <label>ZXDB</label>
    </interactant>
    <organismsDiffer>false</organismsDiffer>
    <experiments>3</experiments>
</comment>
<comment type="subcellular location">
    <subcellularLocation>
        <location evidence="8">Nucleus</location>
    </subcellularLocation>
</comment>
<comment type="subcellular location">
    <molecule>Isoform 4</molecule>
    <subcellularLocation>
        <location evidence="9">Nucleus</location>
    </subcellularLocation>
</comment>
<comment type="alternative products">
    <event type="alternative splicing"/>
    <isoform>
        <id>Q8N5A5-1</id>
        <name>1</name>
        <sequence type="displayed"/>
    </isoform>
    <isoform>
        <id>Q8N5A5-2</id>
        <name>2</name>
        <sequence type="described" ref="VSP_007754"/>
    </isoform>
    <isoform>
        <id>Q8N5A5-3</id>
        <name>3</name>
        <sequence type="described" ref="VSP_038121"/>
    </isoform>
    <isoform>
        <id>Q8N5A5-4</id>
        <name>4</name>
        <name>sZIP</name>
        <sequence type="described" ref="VSP_053599"/>
    </isoform>
</comment>
<comment type="tissue specificity">
    <text evidence="8">Widely expressed.</text>
</comment>
<comment type="induction">
    <text>Down-regulated in breast carcinomas.</text>
</comment>
<comment type="PTM">
    <text evidence="10">Ubiquitinated in case of infection by HIV-1, leading to its degradation. Ubiquitination is mediated by the CUL4A-RBX1-DDB1-DCAF1/VPRBP complex that is hijacked by HIV-1 via interaction between HIV-1 Vpr and DCAF1/VPRBP.</text>
</comment>
<comment type="sequence caution" evidence="15">
    <conflict type="erroneous initiation">
        <sequence resource="EMBL-CDS" id="BAB47476"/>
    </conflict>
    <text>Extended N-terminus.</text>
</comment>
<comment type="sequence caution" evidence="15">
    <conflict type="frameshift">
        <sequence resource="EMBL-CDS" id="BAC11317"/>
    </conflict>
</comment>
<sequence length="531" mass="57359">MDEESLESALQTYRAQLQQVELALGAGLDSSEQADLRQLQGDLKELIELTEASLVSVRKSSLLAALDEERPGRQEDAEYQAFREAITEAVEAPAAARGSGSETVPKAEAGPESAAGGQEEEEGEDEEELSGTKVSAPYYSSWGTLEYHNAMVVGTEEAEDGSAGVRVLYLYPTHKSLKPCPFFLEGKCRFKENCRFSHGQVVSLDELRPFQDPDLSSLQAGSACLAKHQDGLWHAARITDVDNGYYTVKFDSLLLREAVVEGDGILPPLRTEATESDSDSDGTGDSSYARVVGSDAVDSAQSSALCPSLAVVGSDAVDSGTCSSAFAGWEVHTRGIGSRLLTKMGYEFGKGLGRHAEGRVEPIHAVVLPRGKSLDQCVETLQKQTRVGKAGTNKPPRCRGRGARPGGRPAPRNVFDFLNEKLQGQAPGALEAGAAPAGRRSKDMYHASKSAKRALSLRLFQTEEKIERTQRDIRSIQEALARNAGRHSVASAQLQEKLAGAQRQLGQLRAQEAGLQQEQRKADTHKKMTEF</sequence>
<organism>
    <name type="scientific">Homo sapiens</name>
    <name type="common">Human</name>
    <dbReference type="NCBI Taxonomy" id="9606"/>
    <lineage>
        <taxon>Eukaryota</taxon>
        <taxon>Metazoa</taxon>
        <taxon>Chordata</taxon>
        <taxon>Craniata</taxon>
        <taxon>Vertebrata</taxon>
        <taxon>Euteleostomi</taxon>
        <taxon>Mammalia</taxon>
        <taxon>Eutheria</taxon>
        <taxon>Euarchontoglires</taxon>
        <taxon>Primates</taxon>
        <taxon>Haplorrhini</taxon>
        <taxon>Catarrhini</taxon>
        <taxon>Hominidae</taxon>
        <taxon>Homo</taxon>
    </lineage>
</organism>
<name>ZGPAT_HUMAN</name>